<comment type="function">
    <text evidence="1">GTPase that plays an essential role in the late steps of ribosome biogenesis.</text>
</comment>
<comment type="subunit">
    <text evidence="1">Associates with the 50S ribosomal subunit.</text>
</comment>
<comment type="similarity">
    <text evidence="1">Belongs to the TRAFAC class TrmE-Era-EngA-EngB-Septin-like GTPase superfamily. EngA (Der) GTPase family.</text>
</comment>
<protein>
    <recommendedName>
        <fullName evidence="1">GTPase Der</fullName>
    </recommendedName>
    <alternativeName>
        <fullName evidence="1">GTP-binding protein EngA</fullName>
    </alternativeName>
</protein>
<feature type="chain" id="PRO_1000099122" description="GTPase Der">
    <location>
        <begin position="1"/>
        <end position="437"/>
    </location>
</feature>
<feature type="domain" description="EngA-type G 1">
    <location>
        <begin position="4"/>
        <end position="168"/>
    </location>
</feature>
<feature type="domain" description="EngA-type G 2">
    <location>
        <begin position="178"/>
        <end position="353"/>
    </location>
</feature>
<feature type="domain" description="KH-like" evidence="1">
    <location>
        <begin position="354"/>
        <end position="437"/>
    </location>
</feature>
<feature type="binding site" evidence="1">
    <location>
        <begin position="10"/>
        <end position="17"/>
    </location>
    <ligand>
        <name>GTP</name>
        <dbReference type="ChEBI" id="CHEBI:37565"/>
        <label>1</label>
    </ligand>
</feature>
<feature type="binding site" evidence="1">
    <location>
        <begin position="57"/>
        <end position="61"/>
    </location>
    <ligand>
        <name>GTP</name>
        <dbReference type="ChEBI" id="CHEBI:37565"/>
        <label>1</label>
    </ligand>
</feature>
<feature type="binding site" evidence="1">
    <location>
        <begin position="120"/>
        <end position="123"/>
    </location>
    <ligand>
        <name>GTP</name>
        <dbReference type="ChEBI" id="CHEBI:37565"/>
        <label>1</label>
    </ligand>
</feature>
<feature type="binding site" evidence="1">
    <location>
        <begin position="184"/>
        <end position="191"/>
    </location>
    <ligand>
        <name>GTP</name>
        <dbReference type="ChEBI" id="CHEBI:37565"/>
        <label>2</label>
    </ligand>
</feature>
<feature type="binding site" evidence="1">
    <location>
        <begin position="231"/>
        <end position="235"/>
    </location>
    <ligand>
        <name>GTP</name>
        <dbReference type="ChEBI" id="CHEBI:37565"/>
        <label>2</label>
    </ligand>
</feature>
<feature type="binding site" evidence="1">
    <location>
        <begin position="296"/>
        <end position="299"/>
    </location>
    <ligand>
        <name>GTP</name>
        <dbReference type="ChEBI" id="CHEBI:37565"/>
        <label>2</label>
    </ligand>
</feature>
<dbReference type="EMBL" id="CP000685">
    <property type="protein sequence ID" value="ABQ04911.1"/>
    <property type="molecule type" value="Genomic_DNA"/>
</dbReference>
<dbReference type="RefSeq" id="WP_012023955.1">
    <property type="nucleotide sequence ID" value="NC_009441.1"/>
</dbReference>
<dbReference type="SMR" id="A5FIR0"/>
<dbReference type="STRING" id="376686.Fjoh_1879"/>
<dbReference type="KEGG" id="fjo:Fjoh_1879"/>
<dbReference type="eggNOG" id="COG1160">
    <property type="taxonomic scope" value="Bacteria"/>
</dbReference>
<dbReference type="HOGENOM" id="CLU_016077_6_2_10"/>
<dbReference type="OrthoDB" id="9805918at2"/>
<dbReference type="Proteomes" id="UP000006694">
    <property type="component" value="Chromosome"/>
</dbReference>
<dbReference type="GO" id="GO:0005525">
    <property type="term" value="F:GTP binding"/>
    <property type="evidence" value="ECO:0007669"/>
    <property type="project" value="UniProtKB-UniRule"/>
</dbReference>
<dbReference type="GO" id="GO:0043022">
    <property type="term" value="F:ribosome binding"/>
    <property type="evidence" value="ECO:0007669"/>
    <property type="project" value="TreeGrafter"/>
</dbReference>
<dbReference type="GO" id="GO:0042254">
    <property type="term" value="P:ribosome biogenesis"/>
    <property type="evidence" value="ECO:0007669"/>
    <property type="project" value="UniProtKB-KW"/>
</dbReference>
<dbReference type="CDD" id="cd01894">
    <property type="entry name" value="EngA1"/>
    <property type="match status" value="1"/>
</dbReference>
<dbReference type="CDD" id="cd01895">
    <property type="entry name" value="EngA2"/>
    <property type="match status" value="1"/>
</dbReference>
<dbReference type="FunFam" id="3.30.300.20:FF:000004">
    <property type="entry name" value="GTPase Der"/>
    <property type="match status" value="1"/>
</dbReference>
<dbReference type="FunFam" id="3.40.50.300:FF:000040">
    <property type="entry name" value="GTPase Der"/>
    <property type="match status" value="1"/>
</dbReference>
<dbReference type="FunFam" id="3.40.50.300:FF:000953">
    <property type="entry name" value="GTPase Der"/>
    <property type="match status" value="1"/>
</dbReference>
<dbReference type="Gene3D" id="3.30.300.20">
    <property type="match status" value="1"/>
</dbReference>
<dbReference type="Gene3D" id="3.40.50.300">
    <property type="entry name" value="P-loop containing nucleotide triphosphate hydrolases"/>
    <property type="match status" value="2"/>
</dbReference>
<dbReference type="HAMAP" id="MF_00195">
    <property type="entry name" value="GTPase_Der"/>
    <property type="match status" value="1"/>
</dbReference>
<dbReference type="InterPro" id="IPR031166">
    <property type="entry name" value="G_ENGA"/>
</dbReference>
<dbReference type="InterPro" id="IPR006073">
    <property type="entry name" value="GTP-bd"/>
</dbReference>
<dbReference type="InterPro" id="IPR016484">
    <property type="entry name" value="GTPase_Der"/>
</dbReference>
<dbReference type="InterPro" id="IPR032859">
    <property type="entry name" value="KH_dom-like"/>
</dbReference>
<dbReference type="InterPro" id="IPR015946">
    <property type="entry name" value="KH_dom-like_a/b"/>
</dbReference>
<dbReference type="InterPro" id="IPR027417">
    <property type="entry name" value="P-loop_NTPase"/>
</dbReference>
<dbReference type="InterPro" id="IPR005225">
    <property type="entry name" value="Small_GTP-bd"/>
</dbReference>
<dbReference type="NCBIfam" id="TIGR03594">
    <property type="entry name" value="GTPase_EngA"/>
    <property type="match status" value="1"/>
</dbReference>
<dbReference type="NCBIfam" id="TIGR00231">
    <property type="entry name" value="small_GTP"/>
    <property type="match status" value="2"/>
</dbReference>
<dbReference type="PANTHER" id="PTHR43834">
    <property type="entry name" value="GTPASE DER"/>
    <property type="match status" value="1"/>
</dbReference>
<dbReference type="PANTHER" id="PTHR43834:SF6">
    <property type="entry name" value="GTPASE DER"/>
    <property type="match status" value="1"/>
</dbReference>
<dbReference type="Pfam" id="PF14714">
    <property type="entry name" value="KH_dom-like"/>
    <property type="match status" value="1"/>
</dbReference>
<dbReference type="Pfam" id="PF01926">
    <property type="entry name" value="MMR_HSR1"/>
    <property type="match status" value="2"/>
</dbReference>
<dbReference type="PIRSF" id="PIRSF006485">
    <property type="entry name" value="GTP-binding_EngA"/>
    <property type="match status" value="1"/>
</dbReference>
<dbReference type="PRINTS" id="PR00326">
    <property type="entry name" value="GTP1OBG"/>
</dbReference>
<dbReference type="SUPFAM" id="SSF52540">
    <property type="entry name" value="P-loop containing nucleoside triphosphate hydrolases"/>
    <property type="match status" value="2"/>
</dbReference>
<dbReference type="PROSITE" id="PS51712">
    <property type="entry name" value="G_ENGA"/>
    <property type="match status" value="2"/>
</dbReference>
<name>DER_FLAJ1</name>
<proteinExistence type="inferred from homology"/>
<evidence type="ECO:0000255" key="1">
    <source>
        <dbReference type="HAMAP-Rule" id="MF_00195"/>
    </source>
</evidence>
<gene>
    <name evidence="1" type="primary">der</name>
    <name type="synonym">engA</name>
    <name type="ordered locus">Fjoh_1879</name>
</gene>
<reference key="1">
    <citation type="journal article" date="2009" name="Appl. Environ. Microbiol.">
        <title>Novel features of the polysaccharide-digesting gliding bacterium Flavobacterium johnsoniae as revealed by genome sequence analysis.</title>
        <authorList>
            <person name="McBride M.J."/>
            <person name="Xie G."/>
            <person name="Martens E.C."/>
            <person name="Lapidus A."/>
            <person name="Henrissat B."/>
            <person name="Rhodes R.G."/>
            <person name="Goltsman E."/>
            <person name="Wang W."/>
            <person name="Xu J."/>
            <person name="Hunnicutt D.W."/>
            <person name="Staroscik A.M."/>
            <person name="Hoover T.R."/>
            <person name="Cheng Y.Q."/>
            <person name="Stein J.L."/>
        </authorList>
    </citation>
    <scope>NUCLEOTIDE SEQUENCE [LARGE SCALE GENOMIC DNA]</scope>
    <source>
        <strain>ATCC 17061 / DSM 2064 / JCM 8514 / BCRC 14874 / CCUG 350202 / NBRC 14942 / NCIMB 11054 / UW101</strain>
    </source>
</reference>
<keyword id="KW-0342">GTP-binding</keyword>
<keyword id="KW-0547">Nucleotide-binding</keyword>
<keyword id="KW-0677">Repeat</keyword>
<keyword id="KW-0690">Ribosome biogenesis</keyword>
<accession>A5FIR0</accession>
<organism>
    <name type="scientific">Flavobacterium johnsoniae (strain ATCC 17061 / DSM 2064 / JCM 8514 / BCRC 14874 / CCUG 350202 / NBRC 14942 / NCIMB 11054 / UW101)</name>
    <name type="common">Cytophaga johnsonae</name>
    <dbReference type="NCBI Taxonomy" id="376686"/>
    <lineage>
        <taxon>Bacteria</taxon>
        <taxon>Pseudomonadati</taxon>
        <taxon>Bacteroidota</taxon>
        <taxon>Flavobacteriia</taxon>
        <taxon>Flavobacteriales</taxon>
        <taxon>Flavobacteriaceae</taxon>
        <taxon>Flavobacterium</taxon>
    </lineage>
</organism>
<sequence length="437" mass="49687">MNNNIVAIVGRPNVGKSTLFNRLIQRREAIVDSVSGVTRDRNYGKSEWNGKEFSVIDTGGYVRGSDDVFEGEIRKQVELAIDEADVIIFVVDVEEGITPMDETVAKLLRKVTKPVLLAVNKVDNAMREKDAIEFYNLGLGDYYTFASISGSGTGDLLDALIDAFPEKPEPAEAAEELPRFAVVGRPNAGKSSFINALIGQDRYIVTDIAGTTRDAIDTKFDRFGFEFNLVDTAGIRRKAKVKEDLEFYSVMRSVRAIEHADVCILVIDATRGFEGQDQSIFWLAEKNRKGVVILVNKWDLVEKDTMSSRDYEEKIRKELMPFTDVPILFVSALTKQRLLKALEATVQVFENRKQRISTSKFNEYMLKVIEAYPPPAMKGKYVKIKYCMQLPTQTPQFVFFANLPQYVKEPYKRYLENKIRDNWDFAGVPIDIYIREK</sequence>